<feature type="chain" id="PRO_0000285265" description="Interferon-inducible GTPase 5">
    <location>
        <begin position="1"/>
        <end position="463"/>
    </location>
</feature>
<feature type="domain" description="IRG-type G" evidence="3">
    <location>
        <begin position="53"/>
        <end position="235"/>
    </location>
</feature>
<feature type="region of interest" description="Disordered" evidence="4">
    <location>
        <begin position="404"/>
        <end position="437"/>
    </location>
</feature>
<feature type="binding site">
    <location>
        <begin position="62"/>
        <end position="69"/>
    </location>
    <ligand>
        <name>GTP</name>
        <dbReference type="ChEBI" id="CHEBI:37565"/>
    </ligand>
</feature>
<feature type="binding site">
    <location>
        <begin position="87"/>
        <end position="91"/>
    </location>
    <ligand>
        <name>GTP</name>
        <dbReference type="ChEBI" id="CHEBI:37565"/>
    </ligand>
</feature>
<feature type="binding site">
    <location>
        <begin position="169"/>
        <end position="171"/>
    </location>
    <ligand>
        <name>GTP</name>
        <dbReference type="ChEBI" id="CHEBI:37565"/>
    </ligand>
</feature>
<feature type="binding site">
    <location>
        <begin position="216"/>
        <end position="218"/>
    </location>
    <ligand>
        <name>GTP</name>
        <dbReference type="ChEBI" id="CHEBI:37565"/>
    </ligand>
</feature>
<feature type="modified residue" description="Phosphoserine" evidence="1">
    <location>
        <position position="247"/>
    </location>
</feature>
<feature type="modified residue" description="Phosphoserine" evidence="1">
    <location>
        <position position="304"/>
    </location>
</feature>
<feature type="sequence variant" id="VAR_032008" description="In dbSNP:rs11555891." evidence="5">
    <original>D</original>
    <variation>N</variation>
    <location>
        <position position="135"/>
    </location>
</feature>
<protein>
    <recommendedName>
        <fullName>Interferon-inducible GTPase 5</fullName>
        <ecNumber>3.6.5.-</ecNumber>
    </recommendedName>
    <alternativeName>
        <fullName evidence="8">Immunity-related GTPase cinema 1</fullName>
    </alternativeName>
</protein>
<dbReference type="EC" id="3.6.5.-"/>
<dbReference type="EMBL" id="AC005622">
    <property type="protein sequence ID" value="AAC34467.1"/>
    <property type="molecule type" value="Genomic_DNA"/>
</dbReference>
<dbReference type="EMBL" id="BC033853">
    <property type="protein sequence ID" value="AAH33853.1"/>
    <property type="molecule type" value="mRNA"/>
</dbReference>
<dbReference type="EMBL" id="BC066939">
    <property type="protein sequence ID" value="AAH66939.1"/>
    <property type="molecule type" value="mRNA"/>
</dbReference>
<dbReference type="CCDS" id="CCDS12629.1"/>
<dbReference type="RefSeq" id="NP_062558.1">
    <property type="nucleotide sequence ID" value="NM_019612.4"/>
</dbReference>
<dbReference type="RefSeq" id="XP_006723346.1">
    <property type="nucleotide sequence ID" value="XM_006723283.4"/>
</dbReference>
<dbReference type="RefSeq" id="XP_011525420.1">
    <property type="nucleotide sequence ID" value="XM_011527118.4"/>
</dbReference>
<dbReference type="RefSeq" id="XP_054177443.1">
    <property type="nucleotide sequence ID" value="XM_054321468.1"/>
</dbReference>
<dbReference type="RefSeq" id="XP_054177444.1">
    <property type="nucleotide sequence ID" value="XM_054321469.1"/>
</dbReference>
<dbReference type="SMR" id="Q6NXR0"/>
<dbReference type="BioGRID" id="121129">
    <property type="interactions" value="21"/>
</dbReference>
<dbReference type="IntAct" id="Q6NXR0">
    <property type="interactions" value="18"/>
</dbReference>
<dbReference type="STRING" id="9606.ENSP00000244314"/>
<dbReference type="DrugBank" id="DB03814">
    <property type="generic name" value="2-(N-morpholino)ethanesulfonic acid"/>
</dbReference>
<dbReference type="DrugBank" id="DB04315">
    <property type="generic name" value="Guanosine-5'-Diphosphate"/>
</dbReference>
<dbReference type="iPTMnet" id="Q6NXR0"/>
<dbReference type="PhosphoSitePlus" id="Q6NXR0"/>
<dbReference type="BioMuta" id="IRGC"/>
<dbReference type="DMDM" id="74736988"/>
<dbReference type="jPOST" id="Q6NXR0"/>
<dbReference type="MassIVE" id="Q6NXR0"/>
<dbReference type="PaxDb" id="9606-ENSP00000244314"/>
<dbReference type="PeptideAtlas" id="Q6NXR0"/>
<dbReference type="ProteomicsDB" id="66764"/>
<dbReference type="Antibodypedia" id="31099">
    <property type="antibodies" value="192 antibodies from 31 providers"/>
</dbReference>
<dbReference type="DNASU" id="56269"/>
<dbReference type="Ensembl" id="ENST00000244314.6">
    <property type="protein sequence ID" value="ENSP00000244314.5"/>
    <property type="gene ID" value="ENSG00000124449.7"/>
</dbReference>
<dbReference type="GeneID" id="56269"/>
<dbReference type="KEGG" id="hsa:56269"/>
<dbReference type="MANE-Select" id="ENST00000244314.6">
    <property type="protein sequence ID" value="ENSP00000244314.5"/>
    <property type="RefSeq nucleotide sequence ID" value="NM_019612.4"/>
    <property type="RefSeq protein sequence ID" value="NP_062558.1"/>
</dbReference>
<dbReference type="UCSC" id="uc002oxh.4">
    <property type="organism name" value="human"/>
</dbReference>
<dbReference type="AGR" id="HGNC:28835"/>
<dbReference type="CTD" id="56269"/>
<dbReference type="DisGeNET" id="56269"/>
<dbReference type="GeneCards" id="IRGC"/>
<dbReference type="HGNC" id="HGNC:28835">
    <property type="gene designation" value="IRGC"/>
</dbReference>
<dbReference type="HPA" id="ENSG00000124449">
    <property type="expression patterns" value="Tissue enriched (testis)"/>
</dbReference>
<dbReference type="MIM" id="620634">
    <property type="type" value="gene"/>
</dbReference>
<dbReference type="neXtProt" id="NX_Q6NXR0"/>
<dbReference type="OpenTargets" id="ENSG00000124449"/>
<dbReference type="PharmGKB" id="PA142671651"/>
<dbReference type="VEuPathDB" id="HostDB:ENSG00000124449"/>
<dbReference type="eggNOG" id="ENOG502QS9R">
    <property type="taxonomic scope" value="Eukaryota"/>
</dbReference>
<dbReference type="GeneTree" id="ENSGT00950000183007"/>
<dbReference type="HOGENOM" id="CLU_015342_2_0_1"/>
<dbReference type="InParanoid" id="Q6NXR0"/>
<dbReference type="OMA" id="MLVSTWE"/>
<dbReference type="OrthoDB" id="422720at2759"/>
<dbReference type="PAN-GO" id="Q6NXR0">
    <property type="GO annotations" value="4 GO annotations based on evolutionary models"/>
</dbReference>
<dbReference type="PhylomeDB" id="Q6NXR0"/>
<dbReference type="TreeFam" id="TF331897"/>
<dbReference type="PathwayCommons" id="Q6NXR0"/>
<dbReference type="SignaLink" id="Q6NXR0"/>
<dbReference type="BioGRID-ORCS" id="56269">
    <property type="hits" value="11 hits in 1146 CRISPR screens"/>
</dbReference>
<dbReference type="GeneWiki" id="Interferon-inducible_GTPase_5"/>
<dbReference type="GenomeRNAi" id="56269"/>
<dbReference type="Pharos" id="Q6NXR0">
    <property type="development level" value="Tbio"/>
</dbReference>
<dbReference type="PRO" id="PR:Q6NXR0"/>
<dbReference type="Proteomes" id="UP000005640">
    <property type="component" value="Chromosome 19"/>
</dbReference>
<dbReference type="RNAct" id="Q6NXR0">
    <property type="molecule type" value="protein"/>
</dbReference>
<dbReference type="Bgee" id="ENSG00000124449">
    <property type="expression patterns" value="Expressed in left testis and 41 other cell types or tissues"/>
</dbReference>
<dbReference type="ExpressionAtlas" id="Q6NXR0">
    <property type="expression patterns" value="baseline and differential"/>
</dbReference>
<dbReference type="GO" id="GO:0005811">
    <property type="term" value="C:lipid droplet"/>
    <property type="evidence" value="ECO:0000314"/>
    <property type="project" value="UniProtKB"/>
</dbReference>
<dbReference type="GO" id="GO:0016020">
    <property type="term" value="C:membrane"/>
    <property type="evidence" value="ECO:0007669"/>
    <property type="project" value="InterPro"/>
</dbReference>
<dbReference type="GO" id="GO:0036126">
    <property type="term" value="C:sperm flagellum"/>
    <property type="evidence" value="ECO:0000314"/>
    <property type="project" value="UniProtKB"/>
</dbReference>
<dbReference type="GO" id="GO:0097226">
    <property type="term" value="C:sperm mitochondrial sheath"/>
    <property type="evidence" value="ECO:0000314"/>
    <property type="project" value="UniProtKB"/>
</dbReference>
<dbReference type="GO" id="GO:0005525">
    <property type="term" value="F:GTP binding"/>
    <property type="evidence" value="ECO:0007669"/>
    <property type="project" value="UniProtKB-KW"/>
</dbReference>
<dbReference type="GO" id="GO:0003924">
    <property type="term" value="F:GTPase activity"/>
    <property type="evidence" value="ECO:0007669"/>
    <property type="project" value="RHEA"/>
</dbReference>
<dbReference type="GO" id="GO:1902093">
    <property type="term" value="P:positive regulation of flagellated sperm motility"/>
    <property type="evidence" value="ECO:0000250"/>
    <property type="project" value="UniProtKB"/>
</dbReference>
<dbReference type="CDD" id="cd04104">
    <property type="entry name" value="p47_IIGP_like"/>
    <property type="match status" value="1"/>
</dbReference>
<dbReference type="FunFam" id="3.40.50.300:FF:000541">
    <property type="entry name" value="Immunity related GTPase M"/>
    <property type="match status" value="1"/>
</dbReference>
<dbReference type="Gene3D" id="3.40.50.300">
    <property type="entry name" value="P-loop containing nucleotide triphosphate hydrolases"/>
    <property type="match status" value="1"/>
</dbReference>
<dbReference type="InterPro" id="IPR030385">
    <property type="entry name" value="G_IRG_dom"/>
</dbReference>
<dbReference type="InterPro" id="IPR007743">
    <property type="entry name" value="Immunity-related_GTPase-like"/>
</dbReference>
<dbReference type="InterPro" id="IPR051515">
    <property type="entry name" value="IRG"/>
</dbReference>
<dbReference type="InterPro" id="IPR027417">
    <property type="entry name" value="P-loop_NTPase"/>
</dbReference>
<dbReference type="PANTHER" id="PTHR32341">
    <property type="entry name" value="INTERFERON-INDUCIBLE GTPASE"/>
    <property type="match status" value="1"/>
</dbReference>
<dbReference type="PANTHER" id="PTHR32341:SF10">
    <property type="entry name" value="INTERFERON-INDUCIBLE GTPASE 5"/>
    <property type="match status" value="1"/>
</dbReference>
<dbReference type="Pfam" id="PF05049">
    <property type="entry name" value="IIGP"/>
    <property type="match status" value="1"/>
</dbReference>
<dbReference type="SUPFAM" id="SSF52540">
    <property type="entry name" value="P-loop containing nucleoside triphosphate hydrolases"/>
    <property type="match status" value="1"/>
</dbReference>
<dbReference type="PROSITE" id="PS51716">
    <property type="entry name" value="G_IRG"/>
    <property type="match status" value="1"/>
</dbReference>
<sequence>MATSKLPVVPGEEENTILMAKERLEALRTAFESGDLPQAASHLQELLASTESIRLEVGVTGESGAGKSSLINALRGLEAEDPGAALTGVMETTMQPSPYPHPQFPDVTLWDLPGAGSPGCPADKYLKQVDFSRYDFFLLVSPRRCGAVETRLAAEILCQGKKFYFVRTKVDEDLAATRTQRPSGFREAAVLQEIRDHCAERLREAGVADPRIFLVSNLSPARYDFPTLVSTWEHDLPSHRRHAGLLSLPDISLEALQKKKAMLQEQVLKTALVLGVIQALPVPGLAAAYDDALLIHSLRGYHRSFGLDDDSLAKLAEQVGKQAGDLRSVIRSPLANEVSPETVLRLYSQSSDGAMRVARAFERGIPVFGTLVAGGISFGAVYTMLQGCLNEMAEDAQRVRIKALEDDEPQPEVSLEVASDNGVEKGGSGEGGGEEAPLSTCRKLGLLLKYILDSWKKHDSEEK</sequence>
<gene>
    <name evidence="8" type="primary">IRGC</name>
    <name type="synonym">IIGP5</name>
    <name type="synonym">IRGC1</name>
</gene>
<organism>
    <name type="scientific">Homo sapiens</name>
    <name type="common">Human</name>
    <dbReference type="NCBI Taxonomy" id="9606"/>
    <lineage>
        <taxon>Eukaryota</taxon>
        <taxon>Metazoa</taxon>
        <taxon>Chordata</taxon>
        <taxon>Craniata</taxon>
        <taxon>Vertebrata</taxon>
        <taxon>Euteleostomi</taxon>
        <taxon>Mammalia</taxon>
        <taxon>Eutheria</taxon>
        <taxon>Euarchontoglires</taxon>
        <taxon>Primates</taxon>
        <taxon>Haplorrhini</taxon>
        <taxon>Catarrhini</taxon>
        <taxon>Hominidae</taxon>
        <taxon>Homo</taxon>
    </lineage>
</organism>
<evidence type="ECO:0000250" key="1">
    <source>
        <dbReference type="UniProtKB" id="Q6AYF9"/>
    </source>
</evidence>
<evidence type="ECO:0000250" key="2">
    <source>
        <dbReference type="UniProtKB" id="Q8C262"/>
    </source>
</evidence>
<evidence type="ECO:0000255" key="3">
    <source>
        <dbReference type="PROSITE-ProRule" id="PRU01053"/>
    </source>
</evidence>
<evidence type="ECO:0000256" key="4">
    <source>
        <dbReference type="SAM" id="MobiDB-lite"/>
    </source>
</evidence>
<evidence type="ECO:0000269" key="5">
    <source>
    </source>
</evidence>
<evidence type="ECO:0000269" key="6">
    <source>
    </source>
</evidence>
<evidence type="ECO:0000305" key="7"/>
<evidence type="ECO:0000312" key="8">
    <source>
        <dbReference type="HGNC" id="HGNC:28835"/>
    </source>
</evidence>
<name>IIGP5_HUMAN</name>
<reference key="1">
    <citation type="journal article" date="2004" name="Nature">
        <title>The DNA sequence and biology of human chromosome 19.</title>
        <authorList>
            <person name="Grimwood J."/>
            <person name="Gordon L.A."/>
            <person name="Olsen A.S."/>
            <person name="Terry A."/>
            <person name="Schmutz J."/>
            <person name="Lamerdin J.E."/>
            <person name="Hellsten U."/>
            <person name="Goodstein D."/>
            <person name="Couronne O."/>
            <person name="Tran-Gyamfi M."/>
            <person name="Aerts A."/>
            <person name="Altherr M."/>
            <person name="Ashworth L."/>
            <person name="Bajorek E."/>
            <person name="Black S."/>
            <person name="Branscomb E."/>
            <person name="Caenepeel S."/>
            <person name="Carrano A.V."/>
            <person name="Caoile C."/>
            <person name="Chan Y.M."/>
            <person name="Christensen M."/>
            <person name="Cleland C.A."/>
            <person name="Copeland A."/>
            <person name="Dalin E."/>
            <person name="Dehal P."/>
            <person name="Denys M."/>
            <person name="Detter J.C."/>
            <person name="Escobar J."/>
            <person name="Flowers D."/>
            <person name="Fotopulos D."/>
            <person name="Garcia C."/>
            <person name="Georgescu A.M."/>
            <person name="Glavina T."/>
            <person name="Gomez M."/>
            <person name="Gonzales E."/>
            <person name="Groza M."/>
            <person name="Hammon N."/>
            <person name="Hawkins T."/>
            <person name="Haydu L."/>
            <person name="Ho I."/>
            <person name="Huang W."/>
            <person name="Israni S."/>
            <person name="Jett J."/>
            <person name="Kadner K."/>
            <person name="Kimball H."/>
            <person name="Kobayashi A."/>
            <person name="Larionov V."/>
            <person name="Leem S.-H."/>
            <person name="Lopez F."/>
            <person name="Lou Y."/>
            <person name="Lowry S."/>
            <person name="Malfatti S."/>
            <person name="Martinez D."/>
            <person name="McCready P.M."/>
            <person name="Medina C."/>
            <person name="Morgan J."/>
            <person name="Nelson K."/>
            <person name="Nolan M."/>
            <person name="Ovcharenko I."/>
            <person name="Pitluck S."/>
            <person name="Pollard M."/>
            <person name="Popkie A.P."/>
            <person name="Predki P."/>
            <person name="Quan G."/>
            <person name="Ramirez L."/>
            <person name="Rash S."/>
            <person name="Retterer J."/>
            <person name="Rodriguez A."/>
            <person name="Rogers S."/>
            <person name="Salamov A."/>
            <person name="Salazar A."/>
            <person name="She X."/>
            <person name="Smith D."/>
            <person name="Slezak T."/>
            <person name="Solovyev V."/>
            <person name="Thayer N."/>
            <person name="Tice H."/>
            <person name="Tsai M."/>
            <person name="Ustaszewska A."/>
            <person name="Vo N."/>
            <person name="Wagner M."/>
            <person name="Wheeler J."/>
            <person name="Wu K."/>
            <person name="Xie G."/>
            <person name="Yang J."/>
            <person name="Dubchak I."/>
            <person name="Furey T.S."/>
            <person name="DeJong P."/>
            <person name="Dickson M."/>
            <person name="Gordon D."/>
            <person name="Eichler E.E."/>
            <person name="Pennacchio L.A."/>
            <person name="Richardson P."/>
            <person name="Stubbs L."/>
            <person name="Rokhsar D.S."/>
            <person name="Myers R.M."/>
            <person name="Rubin E.M."/>
            <person name="Lucas S.M."/>
        </authorList>
    </citation>
    <scope>NUCLEOTIDE SEQUENCE [LARGE SCALE GENOMIC DNA]</scope>
</reference>
<reference key="2">
    <citation type="journal article" date="2004" name="Genome Res.">
        <title>The status, quality, and expansion of the NIH full-length cDNA project: the Mammalian Gene Collection (MGC).</title>
        <authorList>
            <consortium name="The MGC Project Team"/>
        </authorList>
    </citation>
    <scope>NUCLEOTIDE SEQUENCE [LARGE SCALE MRNA]</scope>
    <scope>VARIANT ASN-135</scope>
    <source>
        <tissue>Brain</tissue>
        <tissue>Testis</tissue>
    </source>
</reference>
<reference key="3">
    <citation type="journal article" date="2023" name="FEBS Lett.">
        <title>The immunity-related GTPase IRGC mediates interaction between lipid droplets and mitochondria to facilitate sperm motility.</title>
        <authorList>
            <person name="Li J."/>
            <person name="Xu X."/>
            <person name="Liu J."/>
            <person name="Zhang S."/>
            <person name="Wang T."/>
            <person name="Liu Y."/>
            <person name="Wang Z."/>
        </authorList>
    </citation>
    <scope>SUBCELLULAR LOCATION</scope>
    <scope>TISSUE SPECIFICITY</scope>
</reference>
<comment type="function">
    <text evidence="2">Required for sperm motility and therefore male fertility, via positive regulation of spermatozoa fibrous sheath formation.</text>
</comment>
<comment type="catalytic activity">
    <reaction>
        <text>GTP + H2O = GDP + phosphate + H(+)</text>
        <dbReference type="Rhea" id="RHEA:19669"/>
        <dbReference type="ChEBI" id="CHEBI:15377"/>
        <dbReference type="ChEBI" id="CHEBI:15378"/>
        <dbReference type="ChEBI" id="CHEBI:37565"/>
        <dbReference type="ChEBI" id="CHEBI:43474"/>
        <dbReference type="ChEBI" id="CHEBI:58189"/>
    </reaction>
</comment>
<comment type="interaction">
    <interactant intactId="EBI-12021374">
        <id>Q6NXR0</id>
    </interactant>
    <interactant intactId="EBI-748961">
        <id>O95273</id>
        <label>CCNDBP1</label>
    </interactant>
    <organismsDiffer>false</organismsDiffer>
    <experiments>3</experiments>
</comment>
<comment type="interaction">
    <interactant intactId="EBI-12021374">
        <id>Q6NXR0</id>
    </interactant>
    <interactant intactId="EBI-7060731">
        <id>P61978-2</id>
        <label>HNRNPK</label>
    </interactant>
    <organismsDiffer>false</organismsDiffer>
    <experiments>3</experiments>
</comment>
<comment type="subcellular location">
    <subcellularLocation>
        <location evidence="6">Cell projection</location>
        <location evidence="6">Cilium</location>
        <location evidence="6">Flagellum</location>
    </subcellularLocation>
    <subcellularLocation>
        <location evidence="6">Lipid droplet</location>
    </subcellularLocation>
    <text evidence="6">Expressed in the sperm mitochondrial sheath.</text>
</comment>
<comment type="tissue specificity">
    <text evidence="6">Abundantly expressed in semen (at protein level).</text>
</comment>
<comment type="miscellaneous">
    <text evidence="6">Asthenozoospermic patients show a decrease in IRGC protein abundance in semen samples and a loss of colocalization with the mitochondria which suggests a role for IRGC in sperm motility.</text>
</comment>
<comment type="similarity">
    <text evidence="3 7">Belongs to the TRAFAC class dynamin-like GTPase superfamily. IRG family.</text>
</comment>
<keyword id="KW-0966">Cell projection</keyword>
<keyword id="KW-0969">Cilium</keyword>
<keyword id="KW-0282">Flagellum</keyword>
<keyword id="KW-0342">GTP-binding</keyword>
<keyword id="KW-0378">Hydrolase</keyword>
<keyword id="KW-0551">Lipid droplet</keyword>
<keyword id="KW-0547">Nucleotide-binding</keyword>
<keyword id="KW-0597">Phosphoprotein</keyword>
<keyword id="KW-1267">Proteomics identification</keyword>
<keyword id="KW-1185">Reference proteome</keyword>
<proteinExistence type="evidence at protein level"/>
<accession>Q6NXR0</accession>
<accession>Q05BR8</accession>